<name>YBBA_ECO57</name>
<comment type="similarity">
    <text evidence="2">Belongs to the ABC transporter superfamily.</text>
</comment>
<organism>
    <name type="scientific">Escherichia coli O157:H7</name>
    <dbReference type="NCBI Taxonomy" id="83334"/>
    <lineage>
        <taxon>Bacteria</taxon>
        <taxon>Pseudomonadati</taxon>
        <taxon>Pseudomonadota</taxon>
        <taxon>Gammaproteobacteria</taxon>
        <taxon>Enterobacterales</taxon>
        <taxon>Enterobacteriaceae</taxon>
        <taxon>Escherichia</taxon>
    </lineage>
</organism>
<feature type="chain" id="PRO_0000093153" description="Uncharacterized ABC transporter ATP-binding protein YbbA">
    <location>
        <begin position="1"/>
        <end position="228"/>
    </location>
</feature>
<feature type="domain" description="ABC transporter" evidence="1">
    <location>
        <begin position="7"/>
        <end position="228"/>
    </location>
</feature>
<feature type="binding site" evidence="1">
    <location>
        <begin position="43"/>
        <end position="50"/>
    </location>
    <ligand>
        <name>ATP</name>
        <dbReference type="ChEBI" id="CHEBI:30616"/>
    </ligand>
</feature>
<evidence type="ECO:0000255" key="1">
    <source>
        <dbReference type="PROSITE-ProRule" id="PRU00434"/>
    </source>
</evidence>
<evidence type="ECO:0000305" key="2"/>
<dbReference type="EMBL" id="AE005174">
    <property type="protein sequence ID" value="AAG54852.1"/>
    <property type="molecule type" value="Genomic_DNA"/>
</dbReference>
<dbReference type="EMBL" id="BA000007">
    <property type="protein sequence ID" value="BAB33980.2"/>
    <property type="molecule type" value="Genomic_DNA"/>
</dbReference>
<dbReference type="PIR" id="F90698">
    <property type="entry name" value="F90698"/>
</dbReference>
<dbReference type="PIR" id="H85548">
    <property type="entry name" value="H85548"/>
</dbReference>
<dbReference type="RefSeq" id="NP_308584.1">
    <property type="nucleotide sequence ID" value="NC_002695.1"/>
</dbReference>
<dbReference type="RefSeq" id="WP_001110573.1">
    <property type="nucleotide sequence ID" value="NZ_VOAI01000005.1"/>
</dbReference>
<dbReference type="SMR" id="P0A9T9"/>
<dbReference type="STRING" id="155864.Z0648"/>
<dbReference type="GeneID" id="915350"/>
<dbReference type="GeneID" id="93776954"/>
<dbReference type="KEGG" id="ece:Z0648"/>
<dbReference type="KEGG" id="ecs:ECs_0558"/>
<dbReference type="PATRIC" id="fig|386585.9.peg.665"/>
<dbReference type="eggNOG" id="COG2755">
    <property type="taxonomic scope" value="Bacteria"/>
</dbReference>
<dbReference type="eggNOG" id="COG4181">
    <property type="taxonomic scope" value="Bacteria"/>
</dbReference>
<dbReference type="HOGENOM" id="CLU_000604_1_22_6"/>
<dbReference type="OMA" id="HPRDQFV"/>
<dbReference type="Proteomes" id="UP000000558">
    <property type="component" value="Chromosome"/>
</dbReference>
<dbReference type="Proteomes" id="UP000002519">
    <property type="component" value="Chromosome"/>
</dbReference>
<dbReference type="GO" id="GO:0005524">
    <property type="term" value="F:ATP binding"/>
    <property type="evidence" value="ECO:0007669"/>
    <property type="project" value="UniProtKB-KW"/>
</dbReference>
<dbReference type="GO" id="GO:0016887">
    <property type="term" value="F:ATP hydrolysis activity"/>
    <property type="evidence" value="ECO:0007669"/>
    <property type="project" value="InterPro"/>
</dbReference>
<dbReference type="CDD" id="cd03255">
    <property type="entry name" value="ABC_MJ0796_LolCDE_FtsE"/>
    <property type="match status" value="1"/>
</dbReference>
<dbReference type="FunFam" id="3.40.50.300:FF:000423">
    <property type="entry name" value="ABC transporter ATP-binding protein YbbA"/>
    <property type="match status" value="1"/>
</dbReference>
<dbReference type="Gene3D" id="3.40.50.300">
    <property type="entry name" value="P-loop containing nucleotide triphosphate hydrolases"/>
    <property type="match status" value="1"/>
</dbReference>
<dbReference type="InterPro" id="IPR003593">
    <property type="entry name" value="AAA+_ATPase"/>
</dbReference>
<dbReference type="InterPro" id="IPR003439">
    <property type="entry name" value="ABC_transporter-like_ATP-bd"/>
</dbReference>
<dbReference type="InterPro" id="IPR017871">
    <property type="entry name" value="ABC_transporter-like_CS"/>
</dbReference>
<dbReference type="InterPro" id="IPR017911">
    <property type="entry name" value="MacB-like_ATP-bd"/>
</dbReference>
<dbReference type="InterPro" id="IPR027417">
    <property type="entry name" value="P-loop_NTPase"/>
</dbReference>
<dbReference type="NCBIfam" id="NF007879">
    <property type="entry name" value="PRK10584.1"/>
    <property type="match status" value="1"/>
</dbReference>
<dbReference type="PANTHER" id="PTHR42798:SF2">
    <property type="entry name" value="ABC TRANSPORTER ATP-BINDING PROTEIN MG467-RELATED"/>
    <property type="match status" value="1"/>
</dbReference>
<dbReference type="PANTHER" id="PTHR42798">
    <property type="entry name" value="LIPOPROTEIN-RELEASING SYSTEM ATP-BINDING PROTEIN LOLD"/>
    <property type="match status" value="1"/>
</dbReference>
<dbReference type="Pfam" id="PF00005">
    <property type="entry name" value="ABC_tran"/>
    <property type="match status" value="1"/>
</dbReference>
<dbReference type="SMART" id="SM00382">
    <property type="entry name" value="AAA"/>
    <property type="match status" value="1"/>
</dbReference>
<dbReference type="SUPFAM" id="SSF52540">
    <property type="entry name" value="P-loop containing nucleoside triphosphate hydrolases"/>
    <property type="match status" value="1"/>
</dbReference>
<dbReference type="PROSITE" id="PS00211">
    <property type="entry name" value="ABC_TRANSPORTER_1"/>
    <property type="match status" value="1"/>
</dbReference>
<dbReference type="PROSITE" id="PS50893">
    <property type="entry name" value="ABC_TRANSPORTER_2"/>
    <property type="match status" value="1"/>
</dbReference>
<sequence>MPAENIVEVHHLKKSVGQGEHELSILTGVELVVKRGETIALVGESGSGKSTLLAILAGLDDGSSGEVSLVGQPLHNMDEEARAKLRAKHVGFVFQSFMLIPTLNALENVELPALLRGESSAESRNGAKALLEQLGLGKRLDHLPAQLSGGEQQRVALARAFNGRPDVLFADEPTGNLDRQTGDKIADLLFSLNREHGTTLIMVTHDLQLAARCDRCLRLVNGQLQEEA</sequence>
<gene>
    <name type="primary">ybbA</name>
    <name type="ordered locus">Z0648</name>
    <name type="ordered locus">ECs0558</name>
</gene>
<keyword id="KW-0067">ATP-binding</keyword>
<keyword id="KW-0547">Nucleotide-binding</keyword>
<keyword id="KW-1185">Reference proteome</keyword>
<keyword id="KW-0813">Transport</keyword>
<proteinExistence type="inferred from homology"/>
<protein>
    <recommendedName>
        <fullName>Uncharacterized ABC transporter ATP-binding protein YbbA</fullName>
    </recommendedName>
</protein>
<reference key="1">
    <citation type="journal article" date="2001" name="Nature">
        <title>Genome sequence of enterohaemorrhagic Escherichia coli O157:H7.</title>
        <authorList>
            <person name="Perna N.T."/>
            <person name="Plunkett G. III"/>
            <person name="Burland V."/>
            <person name="Mau B."/>
            <person name="Glasner J.D."/>
            <person name="Rose D.J."/>
            <person name="Mayhew G.F."/>
            <person name="Evans P.S."/>
            <person name="Gregor J."/>
            <person name="Kirkpatrick H.A."/>
            <person name="Posfai G."/>
            <person name="Hackett J."/>
            <person name="Klink S."/>
            <person name="Boutin A."/>
            <person name="Shao Y."/>
            <person name="Miller L."/>
            <person name="Grotbeck E.J."/>
            <person name="Davis N.W."/>
            <person name="Lim A."/>
            <person name="Dimalanta E.T."/>
            <person name="Potamousis K."/>
            <person name="Apodaca J."/>
            <person name="Anantharaman T.S."/>
            <person name="Lin J."/>
            <person name="Yen G."/>
            <person name="Schwartz D.C."/>
            <person name="Welch R.A."/>
            <person name="Blattner F.R."/>
        </authorList>
    </citation>
    <scope>NUCLEOTIDE SEQUENCE [LARGE SCALE GENOMIC DNA]</scope>
    <source>
        <strain>O157:H7 / EDL933 / ATCC 700927 / EHEC</strain>
    </source>
</reference>
<reference key="2">
    <citation type="journal article" date="2001" name="DNA Res.">
        <title>Complete genome sequence of enterohemorrhagic Escherichia coli O157:H7 and genomic comparison with a laboratory strain K-12.</title>
        <authorList>
            <person name="Hayashi T."/>
            <person name="Makino K."/>
            <person name="Ohnishi M."/>
            <person name="Kurokawa K."/>
            <person name="Ishii K."/>
            <person name="Yokoyama K."/>
            <person name="Han C.-G."/>
            <person name="Ohtsubo E."/>
            <person name="Nakayama K."/>
            <person name="Murata T."/>
            <person name="Tanaka M."/>
            <person name="Tobe T."/>
            <person name="Iida T."/>
            <person name="Takami H."/>
            <person name="Honda T."/>
            <person name="Sasakawa C."/>
            <person name="Ogasawara N."/>
            <person name="Yasunaga T."/>
            <person name="Kuhara S."/>
            <person name="Shiba T."/>
            <person name="Hattori M."/>
            <person name="Shinagawa H."/>
        </authorList>
    </citation>
    <scope>NUCLEOTIDE SEQUENCE [LARGE SCALE GENOMIC DNA]</scope>
    <source>
        <strain>O157:H7 / Sakai / RIMD 0509952 / EHEC</strain>
    </source>
</reference>
<accession>P0A9T9</accession>
<accession>A0A6M0JI05</accession>
<accession>P31219</accession>
<accession>P77322</accession>
<accession>Q7AGW3</accession>
<accession>Q8XCZ6</accession>